<accession>B9KW13</accession>
<gene>
    <name evidence="1" type="primary">ctaA</name>
    <name type="ordered locus">RSKD131_3157</name>
</gene>
<proteinExistence type="inferred from homology"/>
<comment type="function">
    <text evidence="1">Catalyzes the conversion of heme O to heme A by two successive hydroxylations of the methyl group at C8. The first hydroxylation forms heme I, the second hydroxylation results in an unstable dihydroxymethyl group, which spontaneously dehydrates, resulting in the formyl group of heme A.</text>
</comment>
<comment type="catalytic activity">
    <reaction evidence="1">
        <text>Fe(II)-heme o + 2 A + H2O = Fe(II)-heme a + 2 AH2</text>
        <dbReference type="Rhea" id="RHEA:63388"/>
        <dbReference type="ChEBI" id="CHEBI:13193"/>
        <dbReference type="ChEBI" id="CHEBI:15377"/>
        <dbReference type="ChEBI" id="CHEBI:17499"/>
        <dbReference type="ChEBI" id="CHEBI:60530"/>
        <dbReference type="ChEBI" id="CHEBI:61715"/>
        <dbReference type="EC" id="1.17.99.9"/>
    </reaction>
    <physiologicalReaction direction="left-to-right" evidence="1">
        <dbReference type="Rhea" id="RHEA:63389"/>
    </physiologicalReaction>
</comment>
<comment type="cofactor">
    <cofactor evidence="1">
        <name>heme b</name>
        <dbReference type="ChEBI" id="CHEBI:60344"/>
    </cofactor>
</comment>
<comment type="pathway">
    <text evidence="1">Porphyrin-containing compound metabolism; heme A biosynthesis; heme A from heme O: step 1/1.</text>
</comment>
<comment type="subunit">
    <text evidence="1">Interacts with CtaB.</text>
</comment>
<comment type="subcellular location">
    <subcellularLocation>
        <location evidence="1">Cell membrane</location>
        <topology evidence="1">Multi-pass membrane protein</topology>
    </subcellularLocation>
</comment>
<comment type="similarity">
    <text evidence="1">Belongs to the COX15/CtaA family. Type 2 subfamily.</text>
</comment>
<dbReference type="EC" id="1.17.99.9" evidence="1"/>
<dbReference type="EMBL" id="CP001151">
    <property type="protein sequence ID" value="ACM03017.1"/>
    <property type="molecule type" value="Genomic_DNA"/>
</dbReference>
<dbReference type="RefSeq" id="WP_012640809.1">
    <property type="nucleotide sequence ID" value="NC_011958.1"/>
</dbReference>
<dbReference type="SMR" id="B9KW13"/>
<dbReference type="GeneID" id="67448512"/>
<dbReference type="KEGG" id="rsk:RSKD131_3157"/>
<dbReference type="HOGENOM" id="CLU_017627_0_0_5"/>
<dbReference type="UniPathway" id="UPA00269">
    <property type="reaction ID" value="UER00713"/>
</dbReference>
<dbReference type="GO" id="GO:0005886">
    <property type="term" value="C:plasma membrane"/>
    <property type="evidence" value="ECO:0007669"/>
    <property type="project" value="UniProtKB-SubCell"/>
</dbReference>
<dbReference type="GO" id="GO:0046872">
    <property type="term" value="F:metal ion binding"/>
    <property type="evidence" value="ECO:0007669"/>
    <property type="project" value="UniProtKB-KW"/>
</dbReference>
<dbReference type="GO" id="GO:0016653">
    <property type="term" value="F:oxidoreductase activity, acting on NAD(P)H, heme protein as acceptor"/>
    <property type="evidence" value="ECO:0007669"/>
    <property type="project" value="InterPro"/>
</dbReference>
<dbReference type="GO" id="GO:0006784">
    <property type="term" value="P:heme A biosynthetic process"/>
    <property type="evidence" value="ECO:0007669"/>
    <property type="project" value="UniProtKB-UniRule"/>
</dbReference>
<dbReference type="HAMAP" id="MF_01665">
    <property type="entry name" value="HemeA_synth_type2"/>
    <property type="match status" value="1"/>
</dbReference>
<dbReference type="InterPro" id="IPR003780">
    <property type="entry name" value="COX15/CtaA_fam"/>
</dbReference>
<dbReference type="InterPro" id="IPR054616">
    <property type="entry name" value="HemA_synt_rhodobact"/>
</dbReference>
<dbReference type="InterPro" id="IPR023754">
    <property type="entry name" value="HemeA_Synthase_type2"/>
</dbReference>
<dbReference type="NCBIfam" id="NF045570">
    <property type="entry name" value="HemSynCtaAAlphapr"/>
    <property type="match status" value="1"/>
</dbReference>
<dbReference type="PANTHER" id="PTHR23289">
    <property type="entry name" value="CYTOCHROME C OXIDASE ASSEMBLY PROTEIN COX15"/>
    <property type="match status" value="1"/>
</dbReference>
<dbReference type="PANTHER" id="PTHR23289:SF2">
    <property type="entry name" value="CYTOCHROME C OXIDASE ASSEMBLY PROTEIN COX15 HOMOLOG"/>
    <property type="match status" value="1"/>
</dbReference>
<dbReference type="Pfam" id="PF02628">
    <property type="entry name" value="COX15-CtaA"/>
    <property type="match status" value="1"/>
</dbReference>
<reference key="1">
    <citation type="journal article" date="2009" name="J. Bacteriol.">
        <title>Complete genome sequence of Rhodobacter sphaeroides KD131.</title>
        <authorList>
            <person name="Lim S.-K."/>
            <person name="Kim S.J."/>
            <person name="Cha S.H."/>
            <person name="Oh Y.-K."/>
            <person name="Rhee H.-J."/>
            <person name="Kim M.-S."/>
            <person name="Lee J.K."/>
        </authorList>
    </citation>
    <scope>NUCLEOTIDE SEQUENCE [LARGE SCALE GENOMIC DNA]</scope>
    <source>
        <strain>KD131 / KCTC 12085</strain>
    </source>
</reference>
<protein>
    <recommendedName>
        <fullName evidence="1">Heme A synthase</fullName>
        <shortName evidence="1">HAS</shortName>
        <ecNumber evidence="1">1.17.99.9</ecNumber>
    </recommendedName>
    <alternativeName>
        <fullName evidence="1">Cytochrome aa3-controlling protein</fullName>
    </alternativeName>
</protein>
<feature type="chain" id="PRO_1000187259" description="Heme A synthase">
    <location>
        <begin position="1"/>
        <end position="391"/>
    </location>
</feature>
<feature type="transmembrane region" description="Helical" evidence="1">
    <location>
        <begin position="37"/>
        <end position="57"/>
    </location>
</feature>
<feature type="transmembrane region" description="Helical" evidence="1">
    <location>
        <begin position="121"/>
        <end position="141"/>
    </location>
</feature>
<feature type="transmembrane region" description="Helical" evidence="1">
    <location>
        <begin position="152"/>
        <end position="172"/>
    </location>
</feature>
<feature type="transmembrane region" description="Helical" evidence="1">
    <location>
        <begin position="186"/>
        <end position="206"/>
    </location>
</feature>
<feature type="transmembrane region" description="Helical" evidence="1">
    <location>
        <begin position="229"/>
        <end position="249"/>
    </location>
</feature>
<feature type="transmembrane region" description="Helical" evidence="1">
    <location>
        <begin position="298"/>
        <end position="318"/>
    </location>
</feature>
<feature type="transmembrane region" description="Helical" evidence="1">
    <location>
        <begin position="332"/>
        <end position="352"/>
    </location>
</feature>
<feature type="transmembrane region" description="Helical" evidence="1">
    <location>
        <begin position="354"/>
        <end position="374"/>
    </location>
</feature>
<feature type="binding site" description="axial binding residue" evidence="1">
    <location>
        <position position="300"/>
    </location>
    <ligand>
        <name>heme</name>
        <dbReference type="ChEBI" id="CHEBI:30413"/>
    </ligand>
    <ligandPart>
        <name>Fe</name>
        <dbReference type="ChEBI" id="CHEBI:18248"/>
    </ligandPart>
</feature>
<feature type="binding site" description="axial binding residue" evidence="1">
    <location>
        <position position="360"/>
    </location>
    <ligand>
        <name>heme</name>
        <dbReference type="ChEBI" id="CHEBI:30413"/>
    </ligand>
    <ligandPart>
        <name>Fe</name>
        <dbReference type="ChEBI" id="CHEBI:18248"/>
    </ligandPart>
</feature>
<organism>
    <name type="scientific">Cereibacter sphaeroides (strain KD131 / KCTC 12085)</name>
    <name type="common">Rhodobacter sphaeroides</name>
    <dbReference type="NCBI Taxonomy" id="557760"/>
    <lineage>
        <taxon>Bacteria</taxon>
        <taxon>Pseudomonadati</taxon>
        <taxon>Pseudomonadota</taxon>
        <taxon>Alphaproteobacteria</taxon>
        <taxon>Rhodobacterales</taxon>
        <taxon>Paracoccaceae</taxon>
        <taxon>Cereibacter</taxon>
    </lineage>
</organism>
<sequence>MAVKKRSIFEEVGQGAKAPVPQGGSIDRGHGGARRGIRLWLMALFLLVMAMIVVGGLTRLTESGLSITEWRPVTGAVPPLNETQWAAEFDKYRDSPQYRLMNAGMTLAEFQRIYWWEWGHRQLGRVIGLVWAVGFLGFLAARRIPRGWWPRLLALGALGGLQGGIGWWMVASGLEGDKVTVESTRLATHLGLAFIILGLIAWQALLLGRSESDLLQARRQKEGRLVTLTTVLIGVAFLQIVLGALVAGIDAGRGFPTWPDMNGTFLPADMFYVPGVETDWRNPAWWLGLLQNPGFVQFLHRMAGYALAALGLIFWIFGRRSRHRATRGAFDLLAMALLAQILLGVGTVLSAAEWQVAIAHQVGAVVIWVLILHARHLALYPRVGSIRKGTL</sequence>
<keyword id="KW-1003">Cell membrane</keyword>
<keyword id="KW-0350">Heme biosynthesis</keyword>
<keyword id="KW-0408">Iron</keyword>
<keyword id="KW-0472">Membrane</keyword>
<keyword id="KW-0479">Metal-binding</keyword>
<keyword id="KW-0560">Oxidoreductase</keyword>
<keyword id="KW-0812">Transmembrane</keyword>
<keyword id="KW-1133">Transmembrane helix</keyword>
<evidence type="ECO:0000255" key="1">
    <source>
        <dbReference type="HAMAP-Rule" id="MF_01665"/>
    </source>
</evidence>
<name>CTAA_CERSK</name>